<proteinExistence type="evidence at transcript level"/>
<gene>
    <name type="primary">isoc1</name>
</gene>
<accession>Q0IHU5</accession>
<reference key="1">
    <citation type="submission" date="2006-09" db="EMBL/GenBank/DDBJ databases">
        <authorList>
            <consortium name="NIH - Xenopus Gene Collection (XGC) project"/>
        </authorList>
    </citation>
    <scope>NUCLEOTIDE SEQUENCE [LARGE SCALE MRNA]</scope>
    <source>
        <tissue>Testis</tissue>
    </source>
</reference>
<protein>
    <recommendedName>
        <fullName>Isochorismatase domain-containing protein 1</fullName>
    </recommendedName>
</protein>
<evidence type="ECO:0000305" key="1"/>
<keyword id="KW-1185">Reference proteome</keyword>
<comment type="similarity">
    <text evidence="1">Belongs to the isochorismatase family.</text>
</comment>
<name>ISOC1_XENTR</name>
<dbReference type="EMBL" id="BC122966">
    <property type="protein sequence ID" value="AAI22967.1"/>
    <property type="molecule type" value="mRNA"/>
</dbReference>
<dbReference type="RefSeq" id="NP_001072597.1">
    <property type="nucleotide sequence ID" value="NM_001079129.1"/>
</dbReference>
<dbReference type="RefSeq" id="XP_017950039.2">
    <property type="nucleotide sequence ID" value="XM_018094550.2"/>
</dbReference>
<dbReference type="SMR" id="Q0IHU5"/>
<dbReference type="FunCoup" id="Q0IHU5">
    <property type="interactions" value="1176"/>
</dbReference>
<dbReference type="STRING" id="8364.ENSXETP00000014429"/>
<dbReference type="PaxDb" id="8364-ENSXETP00000018162"/>
<dbReference type="DNASU" id="780052"/>
<dbReference type="GeneID" id="780052"/>
<dbReference type="KEGG" id="xtr:780052"/>
<dbReference type="AGR" id="Xenbase:XB-GENE-491284"/>
<dbReference type="CTD" id="51015"/>
<dbReference type="Xenbase" id="XB-GENE-491284">
    <property type="gene designation" value="isoc1"/>
</dbReference>
<dbReference type="eggNOG" id="KOG4044">
    <property type="taxonomic scope" value="Eukaryota"/>
</dbReference>
<dbReference type="HOGENOM" id="CLU_047255_0_0_1"/>
<dbReference type="InParanoid" id="Q0IHU5"/>
<dbReference type="OrthoDB" id="269496at2759"/>
<dbReference type="TreeFam" id="TF313459"/>
<dbReference type="Proteomes" id="UP000008143">
    <property type="component" value="Chromosome 1"/>
</dbReference>
<dbReference type="Bgee" id="ENSXETG00000008281">
    <property type="expression patterns" value="Expressed in skeletal muscle tissue and 12 other cell types or tissues"/>
</dbReference>
<dbReference type="CDD" id="cd01012">
    <property type="entry name" value="YcaC_related"/>
    <property type="match status" value="1"/>
</dbReference>
<dbReference type="FunFam" id="3.40.50.850:FF:000001">
    <property type="entry name" value="Isochorismatase domain-containing protein 1"/>
    <property type="match status" value="1"/>
</dbReference>
<dbReference type="Gene3D" id="3.40.50.850">
    <property type="entry name" value="Isochorismatase-like"/>
    <property type="match status" value="1"/>
</dbReference>
<dbReference type="InterPro" id="IPR000868">
    <property type="entry name" value="Isochorismatase-like_dom"/>
</dbReference>
<dbReference type="InterPro" id="IPR036380">
    <property type="entry name" value="Isochorismatase-like_sf"/>
</dbReference>
<dbReference type="InterPro" id="IPR050993">
    <property type="entry name" value="Isochorismatase_domain"/>
</dbReference>
<dbReference type="PANTHER" id="PTHR14119">
    <property type="entry name" value="HYDROLASE"/>
    <property type="match status" value="1"/>
</dbReference>
<dbReference type="PANTHER" id="PTHR14119:SF17">
    <property type="entry name" value="ISOCHORISMATASE DOMAIN-CONTAINING PROTEIN 1"/>
    <property type="match status" value="1"/>
</dbReference>
<dbReference type="Pfam" id="PF00857">
    <property type="entry name" value="Isochorismatase"/>
    <property type="match status" value="1"/>
</dbReference>
<dbReference type="SUPFAM" id="SSF52499">
    <property type="entry name" value="Isochorismatase-like hydrolases"/>
    <property type="match status" value="1"/>
</dbReference>
<feature type="chain" id="PRO_0000268669" description="Isochorismatase domain-containing protein 1">
    <location>
        <begin position="1"/>
        <end position="308"/>
    </location>
</feature>
<organism>
    <name type="scientific">Xenopus tropicalis</name>
    <name type="common">Western clawed frog</name>
    <name type="synonym">Silurana tropicalis</name>
    <dbReference type="NCBI Taxonomy" id="8364"/>
    <lineage>
        <taxon>Eukaryota</taxon>
        <taxon>Metazoa</taxon>
        <taxon>Chordata</taxon>
        <taxon>Craniata</taxon>
        <taxon>Vertebrata</taxon>
        <taxon>Euteleostomi</taxon>
        <taxon>Amphibia</taxon>
        <taxon>Batrachia</taxon>
        <taxon>Anura</taxon>
        <taxon>Pipoidea</taxon>
        <taxon>Pipidae</taxon>
        <taxon>Xenopodinae</taxon>
        <taxon>Xenopus</taxon>
        <taxon>Silurana</taxon>
    </lineage>
</organism>
<sequence>MAENPVCTAQVNIGSGSQSNSCISILGSNSINSNSVPVLFCFSVFARPSSVPHGSGYELLIQKFLSLYGDQIDMHRKFVVQLFAEEWGQYIDLPKGFIISERCKIRLVPLQIQLTTLGNLTPASTVFFCCDMQERFRPAIKYFGDIISVGQRLLQGARILGIPVIATEQYPKGLGSTVQELDLTGVKLVLPKTKFSMVLPEVEAALAETPGVRSVVLFGVETHVCIQQTALDLIGRGVEVHIVADATSSRSMMDRMFALERLARNGIIITTSEAILLQLVADKDHPKFKEIQNLIKASAPESGLLSKV</sequence>